<proteinExistence type="evidence at transcript level"/>
<comment type="catalytic activity">
    <reaction>
        <text>O-phospho-L-seryl-[protein] + H2O = L-seryl-[protein] + phosphate</text>
        <dbReference type="Rhea" id="RHEA:20629"/>
        <dbReference type="Rhea" id="RHEA-COMP:9863"/>
        <dbReference type="Rhea" id="RHEA-COMP:11604"/>
        <dbReference type="ChEBI" id="CHEBI:15377"/>
        <dbReference type="ChEBI" id="CHEBI:29999"/>
        <dbReference type="ChEBI" id="CHEBI:43474"/>
        <dbReference type="ChEBI" id="CHEBI:83421"/>
        <dbReference type="EC" id="3.1.3.16"/>
    </reaction>
</comment>
<comment type="catalytic activity">
    <reaction>
        <text>O-phospho-L-threonyl-[protein] + H2O = L-threonyl-[protein] + phosphate</text>
        <dbReference type="Rhea" id="RHEA:47004"/>
        <dbReference type="Rhea" id="RHEA-COMP:11060"/>
        <dbReference type="Rhea" id="RHEA-COMP:11605"/>
        <dbReference type="ChEBI" id="CHEBI:15377"/>
        <dbReference type="ChEBI" id="CHEBI:30013"/>
        <dbReference type="ChEBI" id="CHEBI:43474"/>
        <dbReference type="ChEBI" id="CHEBI:61977"/>
        <dbReference type="EC" id="3.1.3.16"/>
    </reaction>
</comment>
<comment type="cofactor">
    <cofactor evidence="1">
        <name>Mn(2+)</name>
        <dbReference type="ChEBI" id="CHEBI:29035"/>
    </cofactor>
    <text evidence="1">Binds 2 manganese ions per subunit.</text>
</comment>
<comment type="subcellular location">
    <subcellularLocation>
        <location evidence="1">Cytoplasm</location>
    </subcellularLocation>
</comment>
<comment type="similarity">
    <text evidence="2">Belongs to the PPP phosphatase family. PP-2A subfamily.</text>
</comment>
<comment type="sequence caution" evidence="2">
    <conflict type="frameshift">
        <sequence resource="EMBL" id="CM000127"/>
    </conflict>
</comment>
<gene>
    <name type="primary">PP2A3</name>
    <name type="ORF">OsI_006256</name>
</gene>
<name>PP2A3_ORYSI</name>
<protein>
    <recommendedName>
        <fullName>Serine/threonine-protein phosphatase PP2A-3 catalytic subunit</fullName>
        <ecNumber>3.1.3.16</ecNumber>
    </recommendedName>
</protein>
<dbReference type="EC" id="3.1.3.16"/>
<dbReference type="EMBL" id="AF159061">
    <property type="protein sequence ID" value="AAD41126.1"/>
    <property type="molecule type" value="Genomic_DNA"/>
</dbReference>
<dbReference type="EMBL" id="CM000127">
    <property type="status" value="NOT_ANNOTATED_CDS"/>
    <property type="molecule type" value="Genomic_DNA"/>
</dbReference>
<dbReference type="EMBL" id="CT832108">
    <property type="status" value="NOT_ANNOTATED_CDS"/>
    <property type="molecule type" value="mRNA"/>
</dbReference>
<dbReference type="SMR" id="A2X2G3"/>
<dbReference type="STRING" id="39946.A2X2G3"/>
<dbReference type="EnsemblPlants" id="OsGoSa_02g0009080.01">
    <property type="protein sequence ID" value="OsGoSa_02g0009080.01"/>
    <property type="gene ID" value="OsGoSa_02g0009080"/>
</dbReference>
<dbReference type="EnsemblPlants" id="OsIR64_02g0008690.01">
    <property type="protein sequence ID" value="OsIR64_02g0008690.01"/>
    <property type="gene ID" value="OsIR64_02g0008690"/>
</dbReference>
<dbReference type="EnsemblPlants" id="OsKYG_02g0008780.01">
    <property type="protein sequence ID" value="OsKYG_02g0008780.01"/>
    <property type="gene ID" value="OsKYG_02g0008780"/>
</dbReference>
<dbReference type="EnsemblPlants" id="OsLaMu_02g0008820.01">
    <property type="protein sequence ID" value="OsLaMu_02g0008820.01"/>
    <property type="gene ID" value="OsLaMu_02g0008820"/>
</dbReference>
<dbReference type="EnsemblPlants" id="OsLima_02g0009140.01">
    <property type="protein sequence ID" value="OsLima_02g0009140.01"/>
    <property type="gene ID" value="OsLima_02g0009140"/>
</dbReference>
<dbReference type="EnsemblPlants" id="OsLiXu_02g0009070.01">
    <property type="protein sequence ID" value="OsLiXu_02g0009070.01"/>
    <property type="gene ID" value="OsLiXu_02g0009070"/>
</dbReference>
<dbReference type="EnsemblPlants" id="OsMH63_02G009080_01">
    <property type="protein sequence ID" value="OsMH63_02G009080_01"/>
    <property type="gene ID" value="OsMH63_02G009080"/>
</dbReference>
<dbReference type="EnsemblPlants" id="OsPr106_02g0008860.01">
    <property type="protein sequence ID" value="OsPr106_02g0008860.01"/>
    <property type="gene ID" value="OsPr106_02g0008860"/>
</dbReference>
<dbReference type="EnsemblPlants" id="OsZS97_02G008660_01">
    <property type="protein sequence ID" value="OsZS97_02G008660_01"/>
    <property type="gene ID" value="OsZS97_02G008660"/>
</dbReference>
<dbReference type="Gramene" id="OsGoSa_02g0009080.01">
    <property type="protein sequence ID" value="OsGoSa_02g0009080.01"/>
    <property type="gene ID" value="OsGoSa_02g0009080"/>
</dbReference>
<dbReference type="Gramene" id="OsIR64_02g0008690.01">
    <property type="protein sequence ID" value="OsIR64_02g0008690.01"/>
    <property type="gene ID" value="OsIR64_02g0008690"/>
</dbReference>
<dbReference type="Gramene" id="OsKYG_02g0008780.01">
    <property type="protein sequence ID" value="OsKYG_02g0008780.01"/>
    <property type="gene ID" value="OsKYG_02g0008780"/>
</dbReference>
<dbReference type="Gramene" id="OsLaMu_02g0008820.01">
    <property type="protein sequence ID" value="OsLaMu_02g0008820.01"/>
    <property type="gene ID" value="OsLaMu_02g0008820"/>
</dbReference>
<dbReference type="Gramene" id="OsLima_02g0009140.01">
    <property type="protein sequence ID" value="OsLima_02g0009140.01"/>
    <property type="gene ID" value="OsLima_02g0009140"/>
</dbReference>
<dbReference type="Gramene" id="OsLiXu_02g0009070.01">
    <property type="protein sequence ID" value="OsLiXu_02g0009070.01"/>
    <property type="gene ID" value="OsLiXu_02g0009070"/>
</dbReference>
<dbReference type="Gramene" id="OsMH63_02G009080_01">
    <property type="protein sequence ID" value="OsMH63_02G009080_01"/>
    <property type="gene ID" value="OsMH63_02G009080"/>
</dbReference>
<dbReference type="Gramene" id="OsPr106_02g0008860.01">
    <property type="protein sequence ID" value="OsPr106_02g0008860.01"/>
    <property type="gene ID" value="OsPr106_02g0008860"/>
</dbReference>
<dbReference type="Gramene" id="OsZS97_02G008660_01">
    <property type="protein sequence ID" value="OsZS97_02G008660_01"/>
    <property type="gene ID" value="OsZS97_02G008660"/>
</dbReference>
<dbReference type="OrthoDB" id="1930084at2759"/>
<dbReference type="Proteomes" id="UP000007015">
    <property type="component" value="Chromosome 2"/>
</dbReference>
<dbReference type="GO" id="GO:0005737">
    <property type="term" value="C:cytoplasm"/>
    <property type="evidence" value="ECO:0007669"/>
    <property type="project" value="UniProtKB-SubCell"/>
</dbReference>
<dbReference type="GO" id="GO:0046872">
    <property type="term" value="F:metal ion binding"/>
    <property type="evidence" value="ECO:0007669"/>
    <property type="project" value="UniProtKB-KW"/>
</dbReference>
<dbReference type="GO" id="GO:0004722">
    <property type="term" value="F:protein serine/threonine phosphatase activity"/>
    <property type="evidence" value="ECO:0007669"/>
    <property type="project" value="UniProtKB-EC"/>
</dbReference>
<dbReference type="CDD" id="cd07415">
    <property type="entry name" value="MPP_PP2A_PP4_PP6"/>
    <property type="match status" value="1"/>
</dbReference>
<dbReference type="FunFam" id="3.60.21.10:FF:000003">
    <property type="entry name" value="Serine/threonine-protein phosphatase"/>
    <property type="match status" value="1"/>
</dbReference>
<dbReference type="Gene3D" id="3.60.21.10">
    <property type="match status" value="1"/>
</dbReference>
<dbReference type="InterPro" id="IPR004843">
    <property type="entry name" value="Calcineurin-like_PHP_ApaH"/>
</dbReference>
<dbReference type="InterPro" id="IPR029052">
    <property type="entry name" value="Metallo-depent_PP-like"/>
</dbReference>
<dbReference type="InterPro" id="IPR047129">
    <property type="entry name" value="PPA2-like"/>
</dbReference>
<dbReference type="InterPro" id="IPR006186">
    <property type="entry name" value="Ser/Thr-sp_prot-phosphatase"/>
</dbReference>
<dbReference type="PANTHER" id="PTHR45619">
    <property type="entry name" value="SERINE/THREONINE-PROTEIN PHOSPHATASE PP2A-RELATED"/>
    <property type="match status" value="1"/>
</dbReference>
<dbReference type="Pfam" id="PF00149">
    <property type="entry name" value="Metallophos"/>
    <property type="match status" value="1"/>
</dbReference>
<dbReference type="PRINTS" id="PR00114">
    <property type="entry name" value="STPHPHTASE"/>
</dbReference>
<dbReference type="SMART" id="SM00156">
    <property type="entry name" value="PP2Ac"/>
    <property type="match status" value="1"/>
</dbReference>
<dbReference type="SUPFAM" id="SSF56300">
    <property type="entry name" value="Metallo-dependent phosphatases"/>
    <property type="match status" value="1"/>
</dbReference>
<dbReference type="PROSITE" id="PS00125">
    <property type="entry name" value="SER_THR_PHOSPHATASE"/>
    <property type="match status" value="1"/>
</dbReference>
<organism>
    <name type="scientific">Oryza sativa subsp. indica</name>
    <name type="common">Rice</name>
    <dbReference type="NCBI Taxonomy" id="39946"/>
    <lineage>
        <taxon>Eukaryota</taxon>
        <taxon>Viridiplantae</taxon>
        <taxon>Streptophyta</taxon>
        <taxon>Embryophyta</taxon>
        <taxon>Tracheophyta</taxon>
        <taxon>Spermatophyta</taxon>
        <taxon>Magnoliopsida</taxon>
        <taxon>Liliopsida</taxon>
        <taxon>Poales</taxon>
        <taxon>Poaceae</taxon>
        <taxon>BOP clade</taxon>
        <taxon>Oryzoideae</taxon>
        <taxon>Oryzeae</taxon>
        <taxon>Oryzinae</taxon>
        <taxon>Oryza</taxon>
        <taxon>Oryza sativa</taxon>
    </lineage>
</organism>
<accession>A2X2G3</accession>
<accession>Q6Z6L8</accession>
<accession>Q6Z6L9</accession>
<accession>Q9XGT7</accession>
<keyword id="KW-0963">Cytoplasm</keyword>
<keyword id="KW-0378">Hydrolase</keyword>
<keyword id="KW-0464">Manganese</keyword>
<keyword id="KW-0479">Metal-binding</keyword>
<keyword id="KW-0904">Protein phosphatase</keyword>
<keyword id="KW-1185">Reference proteome</keyword>
<reference key="1">
    <citation type="submission" date="1999-06" db="EMBL/GenBank/DDBJ databases">
        <title>Molecular cloning and characterization of protein phosphatase 2A catalytic subunit genes from Oryza sativa.</title>
        <authorList>
            <person name="Yu R.M.K."/>
            <person name="Kong R.Y.C."/>
        </authorList>
    </citation>
    <scope>NUCLEOTIDE SEQUENCE [GENOMIC DNA]</scope>
    <source>
        <strain>cv. IR36</strain>
    </source>
</reference>
<reference key="2">
    <citation type="journal article" date="2005" name="PLoS Biol.">
        <title>The genomes of Oryza sativa: a history of duplications.</title>
        <authorList>
            <person name="Yu J."/>
            <person name="Wang J."/>
            <person name="Lin W."/>
            <person name="Li S."/>
            <person name="Li H."/>
            <person name="Zhou J."/>
            <person name="Ni P."/>
            <person name="Dong W."/>
            <person name="Hu S."/>
            <person name="Zeng C."/>
            <person name="Zhang J."/>
            <person name="Zhang Y."/>
            <person name="Li R."/>
            <person name="Xu Z."/>
            <person name="Li S."/>
            <person name="Li X."/>
            <person name="Zheng H."/>
            <person name="Cong L."/>
            <person name="Lin L."/>
            <person name="Yin J."/>
            <person name="Geng J."/>
            <person name="Li G."/>
            <person name="Shi J."/>
            <person name="Liu J."/>
            <person name="Lv H."/>
            <person name="Li J."/>
            <person name="Wang J."/>
            <person name="Deng Y."/>
            <person name="Ran L."/>
            <person name="Shi X."/>
            <person name="Wang X."/>
            <person name="Wu Q."/>
            <person name="Li C."/>
            <person name="Ren X."/>
            <person name="Wang J."/>
            <person name="Wang X."/>
            <person name="Li D."/>
            <person name="Liu D."/>
            <person name="Zhang X."/>
            <person name="Ji Z."/>
            <person name="Zhao W."/>
            <person name="Sun Y."/>
            <person name="Zhang Z."/>
            <person name="Bao J."/>
            <person name="Han Y."/>
            <person name="Dong L."/>
            <person name="Ji J."/>
            <person name="Chen P."/>
            <person name="Wu S."/>
            <person name="Liu J."/>
            <person name="Xiao Y."/>
            <person name="Bu D."/>
            <person name="Tan J."/>
            <person name="Yang L."/>
            <person name="Ye C."/>
            <person name="Zhang J."/>
            <person name="Xu J."/>
            <person name="Zhou Y."/>
            <person name="Yu Y."/>
            <person name="Zhang B."/>
            <person name="Zhuang S."/>
            <person name="Wei H."/>
            <person name="Liu B."/>
            <person name="Lei M."/>
            <person name="Yu H."/>
            <person name="Li Y."/>
            <person name="Xu H."/>
            <person name="Wei S."/>
            <person name="He X."/>
            <person name="Fang L."/>
            <person name="Zhang Z."/>
            <person name="Zhang Y."/>
            <person name="Huang X."/>
            <person name="Su Z."/>
            <person name="Tong W."/>
            <person name="Li J."/>
            <person name="Tong Z."/>
            <person name="Li S."/>
            <person name="Ye J."/>
            <person name="Wang L."/>
            <person name="Fang L."/>
            <person name="Lei T."/>
            <person name="Chen C.-S."/>
            <person name="Chen H.-C."/>
            <person name="Xu Z."/>
            <person name="Li H."/>
            <person name="Huang H."/>
            <person name="Zhang F."/>
            <person name="Xu H."/>
            <person name="Li N."/>
            <person name="Zhao C."/>
            <person name="Li S."/>
            <person name="Dong L."/>
            <person name="Huang Y."/>
            <person name="Li L."/>
            <person name="Xi Y."/>
            <person name="Qi Q."/>
            <person name="Li W."/>
            <person name="Zhang B."/>
            <person name="Hu W."/>
            <person name="Zhang Y."/>
            <person name="Tian X."/>
            <person name="Jiao Y."/>
            <person name="Liang X."/>
            <person name="Jin J."/>
            <person name="Gao L."/>
            <person name="Zheng W."/>
            <person name="Hao B."/>
            <person name="Liu S.-M."/>
            <person name="Wang W."/>
            <person name="Yuan L."/>
            <person name="Cao M."/>
            <person name="McDermott J."/>
            <person name="Samudrala R."/>
            <person name="Wang J."/>
            <person name="Wong G.K.-S."/>
            <person name="Yang H."/>
        </authorList>
    </citation>
    <scope>NUCLEOTIDE SEQUENCE [LARGE SCALE GENOMIC DNA]</scope>
    <source>
        <strain>cv. 93-11</strain>
    </source>
</reference>
<reference key="3">
    <citation type="journal article" date="2007" name="Plant Mol. Biol.">
        <title>A collection of 10,096 indica rice full-length cDNAs reveals highly expressed sequence divergence between Oryza sativa indica and japonica subspecies.</title>
        <authorList>
            <person name="Liu X."/>
            <person name="Lu T."/>
            <person name="Yu S."/>
            <person name="Li Y."/>
            <person name="Huang Y."/>
            <person name="Huang T."/>
            <person name="Zhang L."/>
            <person name="Zhu J."/>
            <person name="Zhao Q."/>
            <person name="Fan D."/>
            <person name="Mu J."/>
            <person name="Shangguan Y."/>
            <person name="Feng Q."/>
            <person name="Guan J."/>
            <person name="Ying K."/>
            <person name="Zhang Y."/>
            <person name="Lin Z."/>
            <person name="Sun Z."/>
            <person name="Qian Q."/>
            <person name="Lu Y."/>
            <person name="Han B."/>
        </authorList>
    </citation>
    <scope>NUCLEOTIDE SEQUENCE [LARGE SCALE MRNA]</scope>
    <source>
        <strain>cv. Guang-Lu-Ai No.4</strain>
    </source>
</reference>
<sequence>MPSSHGDLDRQIAQLRECKHLAEGEVRALCEQAKAILMEEWNVQPVRCPVTVCGDIHGQFYDLIELFRIGGEAPDTNYLFMGDYVDRGYYSVETVSLLVALKVRYRDRITILRGNHESRQITQVYGFYDECLRKYGNANVWKYFTDLFDYLPLTALIENQVFCLHGGLSPSLDTLDNIRALDRIQEVPHEGPMCDLLWSDPDDRCGWGISPRGAGYTFGQDIAQQFNHTNGLSLISRAHQLVMEGFNWCQDKNVVTVFSAPNYCYRCGNMAAILEIGENMDQNFLQFDPAPRQIEPDTTRKTPDYFL</sequence>
<feature type="chain" id="PRO_0000301657" description="Serine/threonine-protein phosphatase PP2A-3 catalytic subunit">
    <location>
        <begin position="1"/>
        <end position="307"/>
    </location>
</feature>
<feature type="active site" description="Proton donor" evidence="1">
    <location>
        <position position="116"/>
    </location>
</feature>
<feature type="binding site" evidence="1">
    <location>
        <position position="55"/>
    </location>
    <ligand>
        <name>Mn(2+)</name>
        <dbReference type="ChEBI" id="CHEBI:29035"/>
        <label>1</label>
    </ligand>
</feature>
<feature type="binding site" evidence="1">
    <location>
        <position position="57"/>
    </location>
    <ligand>
        <name>Mn(2+)</name>
        <dbReference type="ChEBI" id="CHEBI:29035"/>
        <label>1</label>
    </ligand>
</feature>
<feature type="binding site" evidence="1">
    <location>
        <position position="83"/>
    </location>
    <ligand>
        <name>Mn(2+)</name>
        <dbReference type="ChEBI" id="CHEBI:29035"/>
        <label>1</label>
    </ligand>
</feature>
<feature type="binding site" evidence="1">
    <location>
        <position position="83"/>
    </location>
    <ligand>
        <name>Mn(2+)</name>
        <dbReference type="ChEBI" id="CHEBI:29035"/>
        <label>2</label>
    </ligand>
</feature>
<feature type="binding site" evidence="1">
    <location>
        <position position="115"/>
    </location>
    <ligand>
        <name>Mn(2+)</name>
        <dbReference type="ChEBI" id="CHEBI:29035"/>
        <label>2</label>
    </ligand>
</feature>
<feature type="binding site" evidence="1">
    <location>
        <position position="165"/>
    </location>
    <ligand>
        <name>Mn(2+)</name>
        <dbReference type="ChEBI" id="CHEBI:29035"/>
        <label>2</label>
    </ligand>
</feature>
<feature type="binding site" evidence="1">
    <location>
        <position position="239"/>
    </location>
    <ligand>
        <name>Mn(2+)</name>
        <dbReference type="ChEBI" id="CHEBI:29035"/>
        <label>2</label>
    </ligand>
</feature>
<feature type="sequence conflict" description="In Ref. 2; CM000127." evidence="2" ref="2">
    <original>F</original>
    <variation>P</variation>
    <location>
        <position position="60"/>
    </location>
</feature>
<evidence type="ECO:0000250" key="1"/>
<evidence type="ECO:0000305" key="2"/>